<organism>
    <name type="scientific">Streptomyces alboniger</name>
    <dbReference type="NCBI Taxonomy" id="132473"/>
    <lineage>
        <taxon>Bacteria</taxon>
        <taxon>Bacillati</taxon>
        <taxon>Actinomycetota</taxon>
        <taxon>Actinomycetes</taxon>
        <taxon>Kitasatosporales</taxon>
        <taxon>Streptomycetaceae</taxon>
        <taxon>Streptomyces</taxon>
        <taxon>Streptomyces aurantiacus group</taxon>
    </lineage>
</organism>
<keyword id="KW-0045">Antibiotic biosynthesis</keyword>
<keyword id="KW-0046">Antibiotic resistance</keyword>
<keyword id="KW-1003">Cell membrane</keyword>
<keyword id="KW-0472">Membrane</keyword>
<keyword id="KW-0812">Transmembrane</keyword>
<keyword id="KW-1133">Transmembrane helix</keyword>
<keyword id="KW-0813">Transport</keyword>
<name>PUR8_STRAD</name>
<dbReference type="EMBL" id="X76855">
    <property type="protein sequence ID" value="CAA54186.1"/>
    <property type="molecule type" value="Genomic_DNA"/>
</dbReference>
<dbReference type="RefSeq" id="WP_055528310.1">
    <property type="nucleotide sequence ID" value="NZ_CP023695.1"/>
</dbReference>
<dbReference type="SMR" id="P42670"/>
<dbReference type="TCDB" id="2.A.1.3.11">
    <property type="family name" value="the major facilitator superfamily (mfs)"/>
</dbReference>
<dbReference type="OrthoDB" id="4080117at2"/>
<dbReference type="GO" id="GO:0005886">
    <property type="term" value="C:plasma membrane"/>
    <property type="evidence" value="ECO:0007669"/>
    <property type="project" value="UniProtKB-SubCell"/>
</dbReference>
<dbReference type="GO" id="GO:0022857">
    <property type="term" value="F:transmembrane transporter activity"/>
    <property type="evidence" value="ECO:0007669"/>
    <property type="project" value="InterPro"/>
</dbReference>
<dbReference type="GO" id="GO:0017000">
    <property type="term" value="P:antibiotic biosynthetic process"/>
    <property type="evidence" value="ECO:0007669"/>
    <property type="project" value="UniProtKB-KW"/>
</dbReference>
<dbReference type="GO" id="GO:0046677">
    <property type="term" value="P:response to antibiotic"/>
    <property type="evidence" value="ECO:0007669"/>
    <property type="project" value="UniProtKB-KW"/>
</dbReference>
<dbReference type="CDD" id="cd17321">
    <property type="entry name" value="MFS_MMR_MDR_like"/>
    <property type="match status" value="1"/>
</dbReference>
<dbReference type="Gene3D" id="1.20.1250.20">
    <property type="entry name" value="MFS general substrate transporter like domains"/>
    <property type="match status" value="1"/>
</dbReference>
<dbReference type="Gene3D" id="1.20.1720.10">
    <property type="entry name" value="Multidrug resistance protein D"/>
    <property type="match status" value="1"/>
</dbReference>
<dbReference type="InterPro" id="IPR011701">
    <property type="entry name" value="MFS"/>
</dbReference>
<dbReference type="InterPro" id="IPR020846">
    <property type="entry name" value="MFS_dom"/>
</dbReference>
<dbReference type="InterPro" id="IPR036259">
    <property type="entry name" value="MFS_trans_sf"/>
</dbReference>
<dbReference type="InterPro" id="IPR005829">
    <property type="entry name" value="Sugar_transporter_CS"/>
</dbReference>
<dbReference type="PANTHER" id="PTHR42718:SF46">
    <property type="entry name" value="BLR6921 PROTEIN"/>
    <property type="match status" value="1"/>
</dbReference>
<dbReference type="PANTHER" id="PTHR42718">
    <property type="entry name" value="MAJOR FACILITATOR SUPERFAMILY MULTIDRUG TRANSPORTER MFSC"/>
    <property type="match status" value="1"/>
</dbReference>
<dbReference type="Pfam" id="PF07690">
    <property type="entry name" value="MFS_1"/>
    <property type="match status" value="1"/>
</dbReference>
<dbReference type="PRINTS" id="PR01036">
    <property type="entry name" value="TCRTETB"/>
</dbReference>
<dbReference type="SUPFAM" id="SSF103473">
    <property type="entry name" value="MFS general substrate transporter"/>
    <property type="match status" value="1"/>
</dbReference>
<dbReference type="PROSITE" id="PS50850">
    <property type="entry name" value="MFS"/>
    <property type="match status" value="1"/>
</dbReference>
<comment type="function">
    <text>May be involved in active puromycin efflux energized by a proton-dependent electrochemical gradient. In addition, it could be implicated in secreting N-acetylpuromycin, the last intermediate of the puromycin biosynthesis pathway, to the environment.</text>
</comment>
<comment type="subcellular location">
    <subcellularLocation>
        <location>Cell membrane</location>
        <topology>Multi-pass membrane protein</topology>
    </subcellularLocation>
</comment>
<comment type="similarity">
    <text evidence="2">Belongs to the major facilitator superfamily. EmrB family.</text>
</comment>
<protein>
    <recommendedName>
        <fullName>Puromycin resistance protein pur8</fullName>
    </recommendedName>
</protein>
<accession>P42670</accession>
<evidence type="ECO:0000255" key="1"/>
<evidence type="ECO:0000305" key="2"/>
<sequence length="503" mass="51852">MARKPDISAVPVESAACQGPDPRRWWGLVVILAAQLLVVLDGTVVNIALPSVQRDLGMSDTSRQWVITAYTLAFGGLLLLGGRVADAFGRRRIFAVGILGFGLASLLGGAAPDPGTLFLARALQGVFAAALAPAALALINTLFTEPGERGKAFGVYGAVSGGGAAVGLLAGGLLTEYLDWRWCLYVNAPVALLALLGCRLLPRDRRTGRAVRLDLPGTLLGCGGLVAIVYAFAEAESGWGDPLVVRLLVLGVLMLVAFALVERRVQDPLLPPGVVAHRVRGGSFLVVGLPQIGLFGLFLFLTYYLQGILDYSPVLTGVAFLPLGLGIAVGSSLIAARLLPRTRPRTLIVGALLAAAAGMALLTRLEPDTPQVYLTHLLPAQILIGLGIGCMMMPAMHTATARVAPHEAGAAAAVVNSAQQVGGALGVALLNTVSTGATAAYLADHGTSPAATVDGTVHGYTVAIAFAVGVLLLTAVLAWVLIDSRTEAADETGSASVTPARPR</sequence>
<proteinExistence type="inferred from homology"/>
<feature type="chain" id="PRO_0000173399" description="Puromycin resistance protein pur8">
    <location>
        <begin position="1"/>
        <end position="503"/>
    </location>
</feature>
<feature type="topological domain" description="Cytoplasmic" evidence="1">
    <location>
        <begin position="1"/>
        <end position="24"/>
    </location>
</feature>
<feature type="transmembrane region" description="Helical" evidence="1">
    <location>
        <begin position="25"/>
        <end position="45"/>
    </location>
</feature>
<feature type="topological domain" description="Extracellular" evidence="1">
    <location>
        <begin position="46"/>
        <end position="64"/>
    </location>
</feature>
<feature type="transmembrane region" description="Helical" evidence="1">
    <location>
        <begin position="65"/>
        <end position="85"/>
    </location>
</feature>
<feature type="topological domain" description="Cytoplasmic" evidence="1">
    <location>
        <begin position="86"/>
        <end position="92"/>
    </location>
</feature>
<feature type="transmembrane region" description="Helical" evidence="1">
    <location>
        <begin position="93"/>
        <end position="113"/>
    </location>
</feature>
<feature type="topological domain" description="Extracellular" evidence="1">
    <location>
        <begin position="114"/>
        <end position="122"/>
    </location>
</feature>
<feature type="transmembrane region" description="Helical" evidence="1">
    <location>
        <begin position="123"/>
        <end position="143"/>
    </location>
</feature>
<feature type="topological domain" description="Cytoplasmic" evidence="1">
    <location>
        <begin position="144"/>
        <end position="152"/>
    </location>
</feature>
<feature type="transmembrane region" description="Helical" evidence="1">
    <location>
        <begin position="153"/>
        <end position="173"/>
    </location>
</feature>
<feature type="topological domain" description="Extracellular" evidence="1">
    <location>
        <begin position="174"/>
        <end position="181"/>
    </location>
</feature>
<feature type="transmembrane region" description="Helical" evidence="1">
    <location>
        <begin position="182"/>
        <end position="202"/>
    </location>
</feature>
<feature type="topological domain" description="Cytoplasmic" evidence="1">
    <location>
        <begin position="203"/>
        <end position="212"/>
    </location>
</feature>
<feature type="transmembrane region" description="Helical" evidence="1">
    <location>
        <begin position="213"/>
        <end position="233"/>
    </location>
</feature>
<feature type="topological domain" description="Extracellular" evidence="1">
    <location>
        <begin position="234"/>
        <end position="241"/>
    </location>
</feature>
<feature type="transmembrane region" description="Helical" evidence="1">
    <location>
        <begin position="242"/>
        <end position="262"/>
    </location>
</feature>
<feature type="topological domain" description="Cytoplasmic" evidence="1">
    <location>
        <begin position="263"/>
        <end position="280"/>
    </location>
</feature>
<feature type="transmembrane region" description="Helical" evidence="1">
    <location>
        <begin position="281"/>
        <end position="301"/>
    </location>
</feature>
<feature type="topological domain" description="Extracellular" evidence="1">
    <location>
        <begin position="302"/>
        <end position="313"/>
    </location>
</feature>
<feature type="transmembrane region" description="Helical" evidence="1">
    <location>
        <begin position="314"/>
        <end position="334"/>
    </location>
</feature>
<feature type="topological domain" description="Cytoplasmic" evidence="1">
    <location>
        <begin position="335"/>
        <end position="346"/>
    </location>
</feature>
<feature type="transmembrane region" description="Helical" evidence="1">
    <location>
        <begin position="347"/>
        <end position="367"/>
    </location>
</feature>
<feature type="topological domain" description="Extracellular" evidence="1">
    <location>
        <begin position="368"/>
        <end position="371"/>
    </location>
</feature>
<feature type="transmembrane region" description="Helical" evidence="1">
    <location>
        <begin position="372"/>
        <end position="392"/>
    </location>
</feature>
<feature type="topological domain" description="Cytoplasmic" evidence="1">
    <location>
        <begin position="393"/>
        <end position="422"/>
    </location>
</feature>
<feature type="transmembrane region" description="Helical" evidence="1">
    <location>
        <begin position="423"/>
        <end position="443"/>
    </location>
</feature>
<feature type="topological domain" description="Extracellular" evidence="1">
    <location>
        <begin position="444"/>
        <end position="461"/>
    </location>
</feature>
<feature type="transmembrane region" description="Helical" evidence="1">
    <location>
        <begin position="462"/>
        <end position="482"/>
    </location>
</feature>
<feature type="topological domain" description="Cytoplasmic" evidence="1">
    <location>
        <begin position="483"/>
        <end position="503"/>
    </location>
</feature>
<gene>
    <name type="primary">pur8</name>
</gene>
<reference key="1">
    <citation type="journal article" date="1993" name="Eur. J. Biochem.">
        <title>The pur8 gene from the pur cluster of Streptomyces alboniger encodes a highly hydrophobic polypeptide which confers resistance to puromycin.</title>
        <authorList>
            <person name="Tercero J.A."/>
            <person name="Lacalle R.A."/>
            <person name="Jimenez A."/>
        </authorList>
    </citation>
    <scope>NUCLEOTIDE SEQUENCE [GENOMIC DNA]</scope>
    <source>
        <strain>ATCC 12461 / DSM 40043 / JCM 4309 / NBRC 12738 / NCIMB 13007 / NRRL B-2403</strain>
    </source>
</reference>